<name>RS10A_DROME</name>
<protein>
    <recommendedName>
        <fullName evidence="3">Small ribosomal subunit protein eS10A</fullName>
    </recommendedName>
    <alternativeName>
        <fullName>40S ribosomal protein S10a</fullName>
    </alternativeName>
</protein>
<dbReference type="EMBL" id="AE014297">
    <property type="protein sequence ID" value="AAF56731.1"/>
    <property type="molecule type" value="Genomic_DNA"/>
</dbReference>
<dbReference type="EMBL" id="AF145693">
    <property type="protein sequence ID" value="AAD38668.2"/>
    <property type="molecule type" value="mRNA"/>
</dbReference>
<dbReference type="RefSeq" id="NP_651576.1">
    <property type="nucleotide sequence ID" value="NM_143319.4"/>
</dbReference>
<dbReference type="PDB" id="4V6W">
    <property type="method" value="EM"/>
    <property type="resolution" value="6.00 A"/>
    <property type="chains" value="AK=1-163"/>
</dbReference>
<dbReference type="PDBsum" id="4V6W"/>
<dbReference type="SMR" id="Q9VB14"/>
<dbReference type="BioGRID" id="68204">
    <property type="interactions" value="85"/>
</dbReference>
<dbReference type="FunCoup" id="Q9VB14">
    <property type="interactions" value="1176"/>
</dbReference>
<dbReference type="IntAct" id="Q9VB14">
    <property type="interactions" value="1"/>
</dbReference>
<dbReference type="STRING" id="7227.FBpp0084564"/>
<dbReference type="PaxDb" id="7227-FBpp0084564"/>
<dbReference type="DNASU" id="43321"/>
<dbReference type="EnsemblMetazoa" id="FBtr0085194">
    <property type="protein sequence ID" value="FBpp0084564"/>
    <property type="gene ID" value="FBgn0027494"/>
</dbReference>
<dbReference type="GeneID" id="43321"/>
<dbReference type="KEGG" id="dme:Dmel_CG12275"/>
<dbReference type="AGR" id="FB:FBgn0027494"/>
<dbReference type="CTD" id="43321"/>
<dbReference type="FlyBase" id="FBgn0027494">
    <property type="gene designation" value="RpS10a"/>
</dbReference>
<dbReference type="VEuPathDB" id="VectorBase:FBgn0027494"/>
<dbReference type="eggNOG" id="KOG3344">
    <property type="taxonomic scope" value="Eukaryota"/>
</dbReference>
<dbReference type="GeneTree" id="ENSGT00940000166022"/>
<dbReference type="HOGENOM" id="CLU_089349_3_1_1"/>
<dbReference type="InParanoid" id="Q9VB14"/>
<dbReference type="OMA" id="ERTKIHR"/>
<dbReference type="OrthoDB" id="5211809at2759"/>
<dbReference type="PhylomeDB" id="Q9VB14"/>
<dbReference type="BioGRID-ORCS" id="43321">
    <property type="hits" value="0 hits in 3 CRISPR screens"/>
</dbReference>
<dbReference type="GenomeRNAi" id="43321"/>
<dbReference type="PRO" id="PR:Q9VB14"/>
<dbReference type="Proteomes" id="UP000000803">
    <property type="component" value="Chromosome 3R"/>
</dbReference>
<dbReference type="Bgee" id="FBgn0027494">
    <property type="expression patterns" value="Expressed in spermatocyte in testis and 24 other cell types or tissues"/>
</dbReference>
<dbReference type="GO" id="GO:0022626">
    <property type="term" value="C:cytosolic ribosome"/>
    <property type="evidence" value="ECO:0000314"/>
    <property type="project" value="FlyBase"/>
</dbReference>
<dbReference type="GO" id="GO:0022627">
    <property type="term" value="C:cytosolic small ribosomal subunit"/>
    <property type="evidence" value="ECO:0000318"/>
    <property type="project" value="GO_Central"/>
</dbReference>
<dbReference type="GO" id="GO:0003723">
    <property type="term" value="F:RNA binding"/>
    <property type="evidence" value="ECO:0000318"/>
    <property type="project" value="GO_Central"/>
</dbReference>
<dbReference type="GO" id="GO:0003735">
    <property type="term" value="F:structural constituent of ribosome"/>
    <property type="evidence" value="ECO:0000314"/>
    <property type="project" value="FlyBase"/>
</dbReference>
<dbReference type="GO" id="GO:0002181">
    <property type="term" value="P:cytoplasmic translation"/>
    <property type="evidence" value="ECO:0000304"/>
    <property type="project" value="FlyBase"/>
</dbReference>
<dbReference type="FunFam" id="1.10.10.10:FF:000025">
    <property type="entry name" value="40S ribosomal protein S10"/>
    <property type="match status" value="1"/>
</dbReference>
<dbReference type="Gene3D" id="1.10.10.10">
    <property type="entry name" value="Winged helix-like DNA-binding domain superfamily/Winged helix DNA-binding domain"/>
    <property type="match status" value="1"/>
</dbReference>
<dbReference type="InterPro" id="IPR005326">
    <property type="entry name" value="Plectin_eS10_N"/>
</dbReference>
<dbReference type="InterPro" id="IPR037447">
    <property type="entry name" value="Ribosomal_eS10"/>
</dbReference>
<dbReference type="InterPro" id="IPR036388">
    <property type="entry name" value="WH-like_DNA-bd_sf"/>
</dbReference>
<dbReference type="PANTHER" id="PTHR12146">
    <property type="entry name" value="40S RIBOSOMAL PROTEIN S10"/>
    <property type="match status" value="1"/>
</dbReference>
<dbReference type="PANTHER" id="PTHR12146:SF0">
    <property type="entry name" value="RIBOSOMAL PROTEIN S10"/>
    <property type="match status" value="1"/>
</dbReference>
<dbReference type="Pfam" id="PF03501">
    <property type="entry name" value="S10_plectin"/>
    <property type="match status" value="1"/>
</dbReference>
<reference key="1">
    <citation type="journal article" date="2000" name="Science">
        <title>The genome sequence of Drosophila melanogaster.</title>
        <authorList>
            <person name="Adams M.D."/>
            <person name="Celniker S.E."/>
            <person name="Holt R.A."/>
            <person name="Evans C.A."/>
            <person name="Gocayne J.D."/>
            <person name="Amanatides P.G."/>
            <person name="Scherer S.E."/>
            <person name="Li P.W."/>
            <person name="Hoskins R.A."/>
            <person name="Galle R.F."/>
            <person name="George R.A."/>
            <person name="Lewis S.E."/>
            <person name="Richards S."/>
            <person name="Ashburner M."/>
            <person name="Henderson S.N."/>
            <person name="Sutton G.G."/>
            <person name="Wortman J.R."/>
            <person name="Yandell M.D."/>
            <person name="Zhang Q."/>
            <person name="Chen L.X."/>
            <person name="Brandon R.C."/>
            <person name="Rogers Y.-H.C."/>
            <person name="Blazej R.G."/>
            <person name="Champe M."/>
            <person name="Pfeiffer B.D."/>
            <person name="Wan K.H."/>
            <person name="Doyle C."/>
            <person name="Baxter E.G."/>
            <person name="Helt G."/>
            <person name="Nelson C.R."/>
            <person name="Miklos G.L.G."/>
            <person name="Abril J.F."/>
            <person name="Agbayani A."/>
            <person name="An H.-J."/>
            <person name="Andrews-Pfannkoch C."/>
            <person name="Baldwin D."/>
            <person name="Ballew R.M."/>
            <person name="Basu A."/>
            <person name="Baxendale J."/>
            <person name="Bayraktaroglu L."/>
            <person name="Beasley E.M."/>
            <person name="Beeson K.Y."/>
            <person name="Benos P.V."/>
            <person name="Berman B.P."/>
            <person name="Bhandari D."/>
            <person name="Bolshakov S."/>
            <person name="Borkova D."/>
            <person name="Botchan M.R."/>
            <person name="Bouck J."/>
            <person name="Brokstein P."/>
            <person name="Brottier P."/>
            <person name="Burtis K.C."/>
            <person name="Busam D.A."/>
            <person name="Butler H."/>
            <person name="Cadieu E."/>
            <person name="Center A."/>
            <person name="Chandra I."/>
            <person name="Cherry J.M."/>
            <person name="Cawley S."/>
            <person name="Dahlke C."/>
            <person name="Davenport L.B."/>
            <person name="Davies P."/>
            <person name="de Pablos B."/>
            <person name="Delcher A."/>
            <person name="Deng Z."/>
            <person name="Mays A.D."/>
            <person name="Dew I."/>
            <person name="Dietz S.M."/>
            <person name="Dodson K."/>
            <person name="Doup L.E."/>
            <person name="Downes M."/>
            <person name="Dugan-Rocha S."/>
            <person name="Dunkov B.C."/>
            <person name="Dunn P."/>
            <person name="Durbin K.J."/>
            <person name="Evangelista C.C."/>
            <person name="Ferraz C."/>
            <person name="Ferriera S."/>
            <person name="Fleischmann W."/>
            <person name="Fosler C."/>
            <person name="Gabrielian A.E."/>
            <person name="Garg N.S."/>
            <person name="Gelbart W.M."/>
            <person name="Glasser K."/>
            <person name="Glodek A."/>
            <person name="Gong F."/>
            <person name="Gorrell J.H."/>
            <person name="Gu Z."/>
            <person name="Guan P."/>
            <person name="Harris M."/>
            <person name="Harris N.L."/>
            <person name="Harvey D.A."/>
            <person name="Heiman T.J."/>
            <person name="Hernandez J.R."/>
            <person name="Houck J."/>
            <person name="Hostin D."/>
            <person name="Houston K.A."/>
            <person name="Howland T.J."/>
            <person name="Wei M.-H."/>
            <person name="Ibegwam C."/>
            <person name="Jalali M."/>
            <person name="Kalush F."/>
            <person name="Karpen G.H."/>
            <person name="Ke Z."/>
            <person name="Kennison J.A."/>
            <person name="Ketchum K.A."/>
            <person name="Kimmel B.E."/>
            <person name="Kodira C.D."/>
            <person name="Kraft C.L."/>
            <person name="Kravitz S."/>
            <person name="Kulp D."/>
            <person name="Lai Z."/>
            <person name="Lasko P."/>
            <person name="Lei Y."/>
            <person name="Levitsky A.A."/>
            <person name="Li J.H."/>
            <person name="Li Z."/>
            <person name="Liang Y."/>
            <person name="Lin X."/>
            <person name="Liu X."/>
            <person name="Mattei B."/>
            <person name="McIntosh T.C."/>
            <person name="McLeod M.P."/>
            <person name="McPherson D."/>
            <person name="Merkulov G."/>
            <person name="Milshina N.V."/>
            <person name="Mobarry C."/>
            <person name="Morris J."/>
            <person name="Moshrefi A."/>
            <person name="Mount S.M."/>
            <person name="Moy M."/>
            <person name="Murphy B."/>
            <person name="Murphy L."/>
            <person name="Muzny D.M."/>
            <person name="Nelson D.L."/>
            <person name="Nelson D.R."/>
            <person name="Nelson K.A."/>
            <person name="Nixon K."/>
            <person name="Nusskern D.R."/>
            <person name="Pacleb J.M."/>
            <person name="Palazzolo M."/>
            <person name="Pittman G.S."/>
            <person name="Pan S."/>
            <person name="Pollard J."/>
            <person name="Puri V."/>
            <person name="Reese M.G."/>
            <person name="Reinert K."/>
            <person name="Remington K."/>
            <person name="Saunders R.D.C."/>
            <person name="Scheeler F."/>
            <person name="Shen H."/>
            <person name="Shue B.C."/>
            <person name="Siden-Kiamos I."/>
            <person name="Simpson M."/>
            <person name="Skupski M.P."/>
            <person name="Smith T.J."/>
            <person name="Spier E."/>
            <person name="Spradling A.C."/>
            <person name="Stapleton M."/>
            <person name="Strong R."/>
            <person name="Sun E."/>
            <person name="Svirskas R."/>
            <person name="Tector C."/>
            <person name="Turner R."/>
            <person name="Venter E."/>
            <person name="Wang A.H."/>
            <person name="Wang X."/>
            <person name="Wang Z.-Y."/>
            <person name="Wassarman D.A."/>
            <person name="Weinstock G.M."/>
            <person name="Weissenbach J."/>
            <person name="Williams S.M."/>
            <person name="Woodage T."/>
            <person name="Worley K.C."/>
            <person name="Wu D."/>
            <person name="Yang S."/>
            <person name="Yao Q.A."/>
            <person name="Ye J."/>
            <person name="Yeh R.-F."/>
            <person name="Zaveri J.S."/>
            <person name="Zhan M."/>
            <person name="Zhang G."/>
            <person name="Zhao Q."/>
            <person name="Zheng L."/>
            <person name="Zheng X.H."/>
            <person name="Zhong F.N."/>
            <person name="Zhong W."/>
            <person name="Zhou X."/>
            <person name="Zhu S.C."/>
            <person name="Zhu X."/>
            <person name="Smith H.O."/>
            <person name="Gibbs R.A."/>
            <person name="Myers E.W."/>
            <person name="Rubin G.M."/>
            <person name="Venter J.C."/>
        </authorList>
    </citation>
    <scope>NUCLEOTIDE SEQUENCE [LARGE SCALE GENOMIC DNA]</scope>
    <source>
        <strain>Berkeley</strain>
    </source>
</reference>
<reference key="2">
    <citation type="journal article" date="2002" name="Genome Biol.">
        <title>Annotation of the Drosophila melanogaster euchromatic genome: a systematic review.</title>
        <authorList>
            <person name="Misra S."/>
            <person name="Crosby M.A."/>
            <person name="Mungall C.J."/>
            <person name="Matthews B.B."/>
            <person name="Campbell K.S."/>
            <person name="Hradecky P."/>
            <person name="Huang Y."/>
            <person name="Kaminker J.S."/>
            <person name="Millburn G.H."/>
            <person name="Prochnik S.E."/>
            <person name="Smith C.D."/>
            <person name="Tupy J.L."/>
            <person name="Whitfield E.J."/>
            <person name="Bayraktaroglu L."/>
            <person name="Berman B.P."/>
            <person name="Bettencourt B.R."/>
            <person name="Celniker S.E."/>
            <person name="de Grey A.D.N.J."/>
            <person name="Drysdale R.A."/>
            <person name="Harris N.L."/>
            <person name="Richter J."/>
            <person name="Russo S."/>
            <person name="Schroeder A.J."/>
            <person name="Shu S.Q."/>
            <person name="Stapleton M."/>
            <person name="Yamada C."/>
            <person name="Ashburner M."/>
            <person name="Gelbart W.M."/>
            <person name="Rubin G.M."/>
            <person name="Lewis S.E."/>
        </authorList>
    </citation>
    <scope>GENOME REANNOTATION</scope>
    <source>
        <strain>Berkeley</strain>
    </source>
</reference>
<reference key="3">
    <citation type="journal article" date="2000" name="Science">
        <title>A Drosophila complementary DNA resource.</title>
        <authorList>
            <person name="Rubin G.M."/>
            <person name="Hong L."/>
            <person name="Brokstein P."/>
            <person name="Evans-Holm M."/>
            <person name="Frise E."/>
            <person name="Stapleton M."/>
            <person name="Harvey D.A."/>
        </authorList>
    </citation>
    <scope>NUCLEOTIDE SEQUENCE [LARGE SCALE MRNA] OF 2-163</scope>
    <source>
        <strain>Berkeley</strain>
        <tissue>Embryo</tissue>
    </source>
</reference>
<reference key="4">
    <citation type="journal article" date="2013" name="Nature">
        <title>Structures of the human and Drosophila 80S ribosome.</title>
        <authorList>
            <person name="Anger A.M."/>
            <person name="Armache J.P."/>
            <person name="Berninghausen O."/>
            <person name="Habeck M."/>
            <person name="Subklewe M."/>
            <person name="Wilson D.N."/>
            <person name="Beckmann R."/>
        </authorList>
    </citation>
    <scope>STRUCTURE BY ELECTRON MICROSCOPY (6.0 ANGSTROMS) OF THE 80S RIBOSOME</scope>
</reference>
<accession>Q9VB14</accession>
<accession>Q9Y0Y3</accession>
<sequence length="163" mass="18231">MFIPKANRVAIYEYLFKEGVLVAKKDSPIQKHSELDKIPNLQVIKVMQSLNSRGWVKEQFAWRHFYWLLTNEGIEELRRYLHLPPEIVPSTLTQTTRSNAVRPRGGPGGPGGGFGGASKTDDDRSNYRRGPGAYGMDKKGDVGAGTGRVEYRGGFGRASRYDN</sequence>
<evidence type="ECO:0000250" key="1"/>
<evidence type="ECO:0000256" key="2">
    <source>
        <dbReference type="SAM" id="MobiDB-lite"/>
    </source>
</evidence>
<evidence type="ECO:0000305" key="3"/>
<gene>
    <name type="primary">RpS10a</name>
    <name type="synonym">RpS10</name>
    <name type="ORF">CG12275</name>
</gene>
<comment type="subcellular location">
    <subcellularLocation>
        <location evidence="1">Cytoplasm</location>
    </subcellularLocation>
</comment>
<comment type="similarity">
    <text evidence="3">Belongs to the eukaryotic ribosomal protein eS10 family.</text>
</comment>
<organism>
    <name type="scientific">Drosophila melanogaster</name>
    <name type="common">Fruit fly</name>
    <dbReference type="NCBI Taxonomy" id="7227"/>
    <lineage>
        <taxon>Eukaryota</taxon>
        <taxon>Metazoa</taxon>
        <taxon>Ecdysozoa</taxon>
        <taxon>Arthropoda</taxon>
        <taxon>Hexapoda</taxon>
        <taxon>Insecta</taxon>
        <taxon>Pterygota</taxon>
        <taxon>Neoptera</taxon>
        <taxon>Endopterygota</taxon>
        <taxon>Diptera</taxon>
        <taxon>Brachycera</taxon>
        <taxon>Muscomorpha</taxon>
        <taxon>Ephydroidea</taxon>
        <taxon>Drosophilidae</taxon>
        <taxon>Drosophila</taxon>
        <taxon>Sophophora</taxon>
    </lineage>
</organism>
<feature type="chain" id="PRO_0000116366" description="Small ribosomal subunit protein eS10A">
    <location>
        <begin position="1"/>
        <end position="163"/>
    </location>
</feature>
<feature type="region of interest" description="Disordered" evidence="2">
    <location>
        <begin position="92"/>
        <end position="163"/>
    </location>
</feature>
<feature type="compositionally biased region" description="Gly residues" evidence="2">
    <location>
        <begin position="105"/>
        <end position="116"/>
    </location>
</feature>
<keyword id="KW-0002">3D-structure</keyword>
<keyword id="KW-0963">Cytoplasm</keyword>
<keyword id="KW-1185">Reference proteome</keyword>
<keyword id="KW-0687">Ribonucleoprotein</keyword>
<keyword id="KW-0689">Ribosomal protein</keyword>
<proteinExistence type="evidence at protein level"/>